<evidence type="ECO:0000255" key="1">
    <source>
        <dbReference type="HAMAP-Rule" id="MF_00049"/>
    </source>
</evidence>
<reference key="1">
    <citation type="submission" date="2008-10" db="EMBL/GenBank/DDBJ databases">
        <title>Genome sequence of Bacillus cereus G9842.</title>
        <authorList>
            <person name="Dodson R.J."/>
            <person name="Durkin A.S."/>
            <person name="Rosovitz M.J."/>
            <person name="Rasko D.A."/>
            <person name="Hoffmaster A."/>
            <person name="Ravel J."/>
            <person name="Sutton G."/>
        </authorList>
    </citation>
    <scope>NUCLEOTIDE SEQUENCE [LARGE SCALE GENOMIC DNA]</scope>
    <source>
        <strain>G9842</strain>
    </source>
</reference>
<protein>
    <recommendedName>
        <fullName evidence="1">Leucine--tRNA ligase</fullName>
        <ecNumber evidence="1">6.1.1.4</ecNumber>
    </recommendedName>
    <alternativeName>
        <fullName evidence="1">Leucyl-tRNA synthetase</fullName>
        <shortName evidence="1">LeuRS</shortName>
    </alternativeName>
</protein>
<feature type="chain" id="PRO_1000199179" description="Leucine--tRNA ligase">
    <location>
        <begin position="1"/>
        <end position="802"/>
    </location>
</feature>
<feature type="short sequence motif" description="'HIGH' region">
    <location>
        <begin position="40"/>
        <end position="51"/>
    </location>
</feature>
<feature type="short sequence motif" description="'KMSKS' region">
    <location>
        <begin position="576"/>
        <end position="580"/>
    </location>
</feature>
<feature type="binding site" evidence="1">
    <location>
        <position position="579"/>
    </location>
    <ligand>
        <name>ATP</name>
        <dbReference type="ChEBI" id="CHEBI:30616"/>
    </ligand>
</feature>
<comment type="catalytic activity">
    <reaction evidence="1">
        <text>tRNA(Leu) + L-leucine + ATP = L-leucyl-tRNA(Leu) + AMP + diphosphate</text>
        <dbReference type="Rhea" id="RHEA:11688"/>
        <dbReference type="Rhea" id="RHEA-COMP:9613"/>
        <dbReference type="Rhea" id="RHEA-COMP:9622"/>
        <dbReference type="ChEBI" id="CHEBI:30616"/>
        <dbReference type="ChEBI" id="CHEBI:33019"/>
        <dbReference type="ChEBI" id="CHEBI:57427"/>
        <dbReference type="ChEBI" id="CHEBI:78442"/>
        <dbReference type="ChEBI" id="CHEBI:78494"/>
        <dbReference type="ChEBI" id="CHEBI:456215"/>
        <dbReference type="EC" id="6.1.1.4"/>
    </reaction>
</comment>
<comment type="subcellular location">
    <subcellularLocation>
        <location evidence="1">Cytoplasm</location>
    </subcellularLocation>
</comment>
<comment type="similarity">
    <text evidence="1">Belongs to the class-I aminoacyl-tRNA synthetase family.</text>
</comment>
<dbReference type="EC" id="6.1.1.4" evidence="1"/>
<dbReference type="EMBL" id="CP001186">
    <property type="protein sequence ID" value="ACK97313.1"/>
    <property type="molecule type" value="Genomic_DNA"/>
</dbReference>
<dbReference type="RefSeq" id="WP_000009438.1">
    <property type="nucleotide sequence ID" value="NC_011772.1"/>
</dbReference>
<dbReference type="SMR" id="B7IL05"/>
<dbReference type="KEGG" id="bcg:BCG9842_B0386"/>
<dbReference type="HOGENOM" id="CLU_004427_0_0_9"/>
<dbReference type="Proteomes" id="UP000006744">
    <property type="component" value="Chromosome"/>
</dbReference>
<dbReference type="GO" id="GO:0005829">
    <property type="term" value="C:cytosol"/>
    <property type="evidence" value="ECO:0007669"/>
    <property type="project" value="TreeGrafter"/>
</dbReference>
<dbReference type="GO" id="GO:0002161">
    <property type="term" value="F:aminoacyl-tRNA deacylase activity"/>
    <property type="evidence" value="ECO:0007669"/>
    <property type="project" value="InterPro"/>
</dbReference>
<dbReference type="GO" id="GO:0005524">
    <property type="term" value="F:ATP binding"/>
    <property type="evidence" value="ECO:0007669"/>
    <property type="project" value="UniProtKB-UniRule"/>
</dbReference>
<dbReference type="GO" id="GO:0004823">
    <property type="term" value="F:leucine-tRNA ligase activity"/>
    <property type="evidence" value="ECO:0007669"/>
    <property type="project" value="UniProtKB-UniRule"/>
</dbReference>
<dbReference type="GO" id="GO:0006429">
    <property type="term" value="P:leucyl-tRNA aminoacylation"/>
    <property type="evidence" value="ECO:0007669"/>
    <property type="project" value="UniProtKB-UniRule"/>
</dbReference>
<dbReference type="CDD" id="cd07958">
    <property type="entry name" value="Anticodon_Ia_Leu_BEm"/>
    <property type="match status" value="1"/>
</dbReference>
<dbReference type="CDD" id="cd00812">
    <property type="entry name" value="LeuRS_core"/>
    <property type="match status" value="1"/>
</dbReference>
<dbReference type="FunFam" id="1.10.730.10:FF:000012">
    <property type="entry name" value="Leucine--tRNA ligase"/>
    <property type="match status" value="1"/>
</dbReference>
<dbReference type="FunFam" id="1.10.730.10:FF:000018">
    <property type="entry name" value="Leucine--tRNA ligase"/>
    <property type="match status" value="1"/>
</dbReference>
<dbReference type="FunFam" id="3.10.20.590:FF:000001">
    <property type="entry name" value="Leucine--tRNA ligase"/>
    <property type="match status" value="1"/>
</dbReference>
<dbReference type="FunFam" id="3.40.50.620:FF:000056">
    <property type="entry name" value="Leucine--tRNA ligase"/>
    <property type="match status" value="1"/>
</dbReference>
<dbReference type="FunFam" id="3.40.50.620:FF:000077">
    <property type="entry name" value="Leucine--tRNA ligase"/>
    <property type="match status" value="1"/>
</dbReference>
<dbReference type="Gene3D" id="3.10.20.590">
    <property type="match status" value="1"/>
</dbReference>
<dbReference type="Gene3D" id="3.40.50.620">
    <property type="entry name" value="HUPs"/>
    <property type="match status" value="2"/>
</dbReference>
<dbReference type="Gene3D" id="1.10.730.10">
    <property type="entry name" value="Isoleucyl-tRNA Synthetase, Domain 1"/>
    <property type="match status" value="1"/>
</dbReference>
<dbReference type="HAMAP" id="MF_00049_B">
    <property type="entry name" value="Leu_tRNA_synth_B"/>
    <property type="match status" value="1"/>
</dbReference>
<dbReference type="InterPro" id="IPR001412">
    <property type="entry name" value="aa-tRNA-synth_I_CS"/>
</dbReference>
<dbReference type="InterPro" id="IPR002300">
    <property type="entry name" value="aa-tRNA-synth_Ia"/>
</dbReference>
<dbReference type="InterPro" id="IPR002302">
    <property type="entry name" value="Leu-tRNA-ligase"/>
</dbReference>
<dbReference type="InterPro" id="IPR025709">
    <property type="entry name" value="Leu_tRNA-synth_edit"/>
</dbReference>
<dbReference type="InterPro" id="IPR013155">
    <property type="entry name" value="M/V/L/I-tRNA-synth_anticd-bd"/>
</dbReference>
<dbReference type="InterPro" id="IPR015413">
    <property type="entry name" value="Methionyl/Leucyl_tRNA_Synth"/>
</dbReference>
<dbReference type="InterPro" id="IPR014729">
    <property type="entry name" value="Rossmann-like_a/b/a_fold"/>
</dbReference>
<dbReference type="InterPro" id="IPR009080">
    <property type="entry name" value="tRNAsynth_Ia_anticodon-bd"/>
</dbReference>
<dbReference type="InterPro" id="IPR009008">
    <property type="entry name" value="Val/Leu/Ile-tRNA-synth_edit"/>
</dbReference>
<dbReference type="NCBIfam" id="TIGR00396">
    <property type="entry name" value="leuS_bact"/>
    <property type="match status" value="1"/>
</dbReference>
<dbReference type="PANTHER" id="PTHR43740:SF2">
    <property type="entry name" value="LEUCINE--TRNA LIGASE, MITOCHONDRIAL"/>
    <property type="match status" value="1"/>
</dbReference>
<dbReference type="PANTHER" id="PTHR43740">
    <property type="entry name" value="LEUCYL-TRNA SYNTHETASE"/>
    <property type="match status" value="1"/>
</dbReference>
<dbReference type="Pfam" id="PF08264">
    <property type="entry name" value="Anticodon_1"/>
    <property type="match status" value="1"/>
</dbReference>
<dbReference type="Pfam" id="PF00133">
    <property type="entry name" value="tRNA-synt_1"/>
    <property type="match status" value="1"/>
</dbReference>
<dbReference type="Pfam" id="PF13603">
    <property type="entry name" value="tRNA-synt_1_2"/>
    <property type="match status" value="1"/>
</dbReference>
<dbReference type="Pfam" id="PF09334">
    <property type="entry name" value="tRNA-synt_1g"/>
    <property type="match status" value="1"/>
</dbReference>
<dbReference type="PRINTS" id="PR00985">
    <property type="entry name" value="TRNASYNTHLEU"/>
</dbReference>
<dbReference type="SUPFAM" id="SSF47323">
    <property type="entry name" value="Anticodon-binding domain of a subclass of class I aminoacyl-tRNA synthetases"/>
    <property type="match status" value="1"/>
</dbReference>
<dbReference type="SUPFAM" id="SSF52374">
    <property type="entry name" value="Nucleotidylyl transferase"/>
    <property type="match status" value="1"/>
</dbReference>
<dbReference type="SUPFAM" id="SSF50677">
    <property type="entry name" value="ValRS/IleRS/LeuRS editing domain"/>
    <property type="match status" value="1"/>
</dbReference>
<dbReference type="PROSITE" id="PS00178">
    <property type="entry name" value="AA_TRNA_LIGASE_I"/>
    <property type="match status" value="1"/>
</dbReference>
<keyword id="KW-0030">Aminoacyl-tRNA synthetase</keyword>
<keyword id="KW-0067">ATP-binding</keyword>
<keyword id="KW-0963">Cytoplasm</keyword>
<keyword id="KW-0436">Ligase</keyword>
<keyword id="KW-0547">Nucleotide-binding</keyword>
<keyword id="KW-0648">Protein biosynthesis</keyword>
<accession>B7IL05</accession>
<name>SYL_BACC2</name>
<proteinExistence type="inferred from homology"/>
<gene>
    <name evidence="1" type="primary">leuS</name>
    <name type="ordered locus">BCG9842_B0386</name>
</gene>
<sequence length="802" mass="91365">MSFNHQDIEKKWQGYWEENKTFRTPDETEKPKFYALDMFPYPSGAGLHVGHPEGYTATDILSRMKRMQGYKVLHPMGWDAFGLPAEQYALDTGNSPAEFTEHNINTFRNQIKSLGFSYDWDREVNTTDPNYYKWTQWIFLKLFEKGLAYVDEVPVNWCPALGTVLANEEIIDGKSERGGHPVERRPMRQWMLKITAYGDRLLEDLDELDWPESLKDMQRNWIGRSEGAEVHFNIDGTDEKFTVFTTRPDTLFGATYCVLAPEHALVAEITTAEQKEAVEAYINAVKMKSDLERTELAKEKTGVFTGAYAVNPVNGEKLPIWIADYVLATYGTGAVMAVPAHDERDYEFASVFNLPMKEVVKGGDITKEVYTGDGAHVNSAFLDGLNKEEAIAKMIEWLEVTSAGNQKVTYRLRDWLFSRQRYWGEPIPVIHWEDGTMTAVKEEELPLVLPKTENIRPSGTGESPLANIDEWVNVVDPETGKKGRRETNTMPQWAGSCWYYLRYIDPNNSEALVDPEKVKQWLPVDIYIGGAEHAVLHLLYARFWHKVLYDIGVVPTKEPFQQLFNQGMILGENNEKMSKSKGNVVNPDDIVASHGADTLRLYEMFMGPLDASIAWSENGLDGARRFLDRVWRLFVQDNGELSEKITDAPNKELEKAYHQTVKKVTEDYAELRFNTAISQMMVFINDAYKAETLPKEYVEGFVKMIAPVAPHIGEELWSKLGYNETITYASWPIFDESKLVEDEVEIVVQVMGKVRAKLTMSKDASKEEMEQLALEAIQDQIEGKTVRKVIVVPGKLVNVVAN</sequence>
<organism>
    <name type="scientific">Bacillus cereus (strain G9842)</name>
    <dbReference type="NCBI Taxonomy" id="405531"/>
    <lineage>
        <taxon>Bacteria</taxon>
        <taxon>Bacillati</taxon>
        <taxon>Bacillota</taxon>
        <taxon>Bacilli</taxon>
        <taxon>Bacillales</taxon>
        <taxon>Bacillaceae</taxon>
        <taxon>Bacillus</taxon>
        <taxon>Bacillus cereus group</taxon>
    </lineage>
</organism>